<sequence length="258" mass="29242">MKIAILYREEREKEGEFLKEKISKEHEVIEFGEANAPGRVTADLIVVVGGDGTVLKAAKKAADGTPMVGFKAGRLGFLTSYTLDEIDRFLEDLRNWNFREETRWFIQIESELGNHLALNDVTLERDLSGKMVEIEVEVEHHSSMWFFADGVVISTPTGSTAYSLSIGGPIIFPECEVLEISPIAPQFFLTRSVVIPSNFKVVVESQRDINMLVDGVLTGKTKRIEVKKSRRYVRILRPPEYDYVTVIRDKLGYGRRIE</sequence>
<accession>Q9X255</accession>
<evidence type="ECO:0000250" key="1"/>
<evidence type="ECO:0000255" key="2">
    <source>
        <dbReference type="HAMAP-Rule" id="MF_00361"/>
    </source>
</evidence>
<evidence type="ECO:0000269" key="3">
    <source>
    </source>
</evidence>
<evidence type="ECO:0007829" key="4">
    <source>
        <dbReference type="PDB" id="1YT5"/>
    </source>
</evidence>
<feature type="chain" id="PRO_0000120680" description="NAD kinase">
    <location>
        <begin position="1"/>
        <end position="258"/>
    </location>
</feature>
<feature type="active site" description="Proton acceptor" evidence="2">
    <location>
        <position position="51"/>
    </location>
</feature>
<feature type="binding site" evidence="2">
    <location>
        <begin position="51"/>
        <end position="52"/>
    </location>
    <ligand>
        <name>NAD(+)</name>
        <dbReference type="ChEBI" id="CHEBI:57540"/>
    </ligand>
</feature>
<feature type="binding site" evidence="2">
    <location>
        <begin position="119"/>
        <end position="120"/>
    </location>
    <ligand>
        <name>NAD(+)</name>
        <dbReference type="ChEBI" id="CHEBI:57540"/>
    </ligand>
</feature>
<feature type="binding site" evidence="2">
    <location>
        <position position="130"/>
    </location>
    <ligand>
        <name>NAD(+)</name>
        <dbReference type="ChEBI" id="CHEBI:57540"/>
    </ligand>
</feature>
<feature type="binding site" evidence="2">
    <location>
        <position position="149"/>
    </location>
    <ligand>
        <name>NAD(+)</name>
        <dbReference type="ChEBI" id="CHEBI:57540"/>
    </ligand>
</feature>
<feature type="binding site" evidence="2">
    <location>
        <begin position="160"/>
        <end position="165"/>
    </location>
    <ligand>
        <name>NAD(+)</name>
        <dbReference type="ChEBI" id="CHEBI:57540"/>
    </ligand>
</feature>
<feature type="binding site" evidence="2">
    <location>
        <position position="184"/>
    </location>
    <ligand>
        <name>NAD(+)</name>
        <dbReference type="ChEBI" id="CHEBI:57540"/>
    </ligand>
</feature>
<feature type="strand" evidence="4">
    <location>
        <begin position="2"/>
        <end position="7"/>
    </location>
</feature>
<feature type="helix" evidence="4">
    <location>
        <begin position="9"/>
        <end position="11"/>
    </location>
</feature>
<feature type="helix" evidence="4">
    <location>
        <begin position="12"/>
        <end position="22"/>
    </location>
</feature>
<feature type="turn" evidence="4">
    <location>
        <begin position="23"/>
        <end position="25"/>
    </location>
</feature>
<feature type="strand" evidence="4">
    <location>
        <begin position="26"/>
        <end position="36"/>
    </location>
</feature>
<feature type="strand" evidence="4">
    <location>
        <begin position="43"/>
        <end position="49"/>
    </location>
</feature>
<feature type="helix" evidence="4">
    <location>
        <begin position="51"/>
        <end position="58"/>
    </location>
</feature>
<feature type="strand" evidence="4">
    <location>
        <begin position="66"/>
        <end position="74"/>
    </location>
</feature>
<feature type="helix" evidence="4">
    <location>
        <begin position="83"/>
        <end position="85"/>
    </location>
</feature>
<feature type="helix" evidence="4">
    <location>
        <begin position="86"/>
        <end position="94"/>
    </location>
</feature>
<feature type="strand" evidence="4">
    <location>
        <begin position="99"/>
        <end position="110"/>
    </location>
</feature>
<feature type="strand" evidence="4">
    <location>
        <begin position="113"/>
        <end position="124"/>
    </location>
</feature>
<feature type="strand" evidence="4">
    <location>
        <begin position="132"/>
        <end position="138"/>
    </location>
</feature>
<feature type="strand" evidence="4">
    <location>
        <begin position="144"/>
        <end position="154"/>
    </location>
</feature>
<feature type="helix" evidence="4">
    <location>
        <begin position="157"/>
        <end position="160"/>
    </location>
</feature>
<feature type="turn" evidence="4">
    <location>
        <begin position="161"/>
        <end position="167"/>
    </location>
</feature>
<feature type="strand" evidence="4">
    <location>
        <begin position="177"/>
        <end position="184"/>
    </location>
</feature>
<feature type="strand" evidence="4">
    <location>
        <begin position="193"/>
        <end position="196"/>
    </location>
</feature>
<feature type="strand" evidence="4">
    <location>
        <begin position="201"/>
        <end position="213"/>
    </location>
</feature>
<feature type="strand" evidence="4">
    <location>
        <begin position="216"/>
        <end position="237"/>
    </location>
</feature>
<feature type="helix" evidence="4">
    <location>
        <begin position="243"/>
        <end position="251"/>
    </location>
</feature>
<dbReference type="EC" id="2.7.1.23" evidence="2"/>
<dbReference type="EMBL" id="AE000512">
    <property type="protein sequence ID" value="AAD36798.1"/>
    <property type="molecule type" value="Genomic_DNA"/>
</dbReference>
<dbReference type="PIR" id="D72217">
    <property type="entry name" value="D72217"/>
</dbReference>
<dbReference type="RefSeq" id="NP_229531.1">
    <property type="nucleotide sequence ID" value="NC_000853.1"/>
</dbReference>
<dbReference type="RefSeq" id="WP_004082250.1">
    <property type="nucleotide sequence ID" value="NC_000853.1"/>
</dbReference>
<dbReference type="PDB" id="1YT5">
    <property type="method" value="X-ray"/>
    <property type="resolution" value="2.30 A"/>
    <property type="chains" value="A/B/C/D=1-258"/>
</dbReference>
<dbReference type="PDBsum" id="1YT5"/>
<dbReference type="SMR" id="Q9X255"/>
<dbReference type="FunCoup" id="Q9X255">
    <property type="interactions" value="391"/>
</dbReference>
<dbReference type="STRING" id="243274.TM_1733"/>
<dbReference type="PaxDb" id="243274-THEMA_05570"/>
<dbReference type="EnsemblBacteria" id="AAD36798">
    <property type="protein sequence ID" value="AAD36798"/>
    <property type="gene ID" value="TM_1733"/>
</dbReference>
<dbReference type="KEGG" id="tma:TM1733"/>
<dbReference type="KEGG" id="tmi:THEMA_05570"/>
<dbReference type="KEGG" id="tmm:Tmari_1741"/>
<dbReference type="KEGG" id="tmw:THMA_1775"/>
<dbReference type="eggNOG" id="COG0061">
    <property type="taxonomic scope" value="Bacteria"/>
</dbReference>
<dbReference type="InParanoid" id="Q9X255"/>
<dbReference type="OrthoDB" id="9774737at2"/>
<dbReference type="BRENDA" id="2.7.1.23">
    <property type="organism ID" value="6331"/>
</dbReference>
<dbReference type="EvolutionaryTrace" id="Q9X255"/>
<dbReference type="Proteomes" id="UP000008183">
    <property type="component" value="Chromosome"/>
</dbReference>
<dbReference type="GO" id="GO:0005737">
    <property type="term" value="C:cytoplasm"/>
    <property type="evidence" value="ECO:0007669"/>
    <property type="project" value="UniProtKB-SubCell"/>
</dbReference>
<dbReference type="GO" id="GO:0005524">
    <property type="term" value="F:ATP binding"/>
    <property type="evidence" value="ECO:0007669"/>
    <property type="project" value="UniProtKB-KW"/>
</dbReference>
<dbReference type="GO" id="GO:0046872">
    <property type="term" value="F:metal ion binding"/>
    <property type="evidence" value="ECO:0007669"/>
    <property type="project" value="UniProtKB-UniRule"/>
</dbReference>
<dbReference type="GO" id="GO:0051287">
    <property type="term" value="F:NAD binding"/>
    <property type="evidence" value="ECO:0007669"/>
    <property type="project" value="UniProtKB-ARBA"/>
</dbReference>
<dbReference type="GO" id="GO:0003951">
    <property type="term" value="F:NAD+ kinase activity"/>
    <property type="evidence" value="ECO:0000318"/>
    <property type="project" value="GO_Central"/>
</dbReference>
<dbReference type="GO" id="GO:0019674">
    <property type="term" value="P:NAD metabolic process"/>
    <property type="evidence" value="ECO:0007669"/>
    <property type="project" value="InterPro"/>
</dbReference>
<dbReference type="GO" id="GO:0006741">
    <property type="term" value="P:NADP biosynthetic process"/>
    <property type="evidence" value="ECO:0000318"/>
    <property type="project" value="GO_Central"/>
</dbReference>
<dbReference type="Gene3D" id="3.40.50.10330">
    <property type="entry name" value="Probable inorganic polyphosphate/atp-NAD kinase, domain 1"/>
    <property type="match status" value="1"/>
</dbReference>
<dbReference type="Gene3D" id="2.60.200.30">
    <property type="entry name" value="Probable inorganic polyphosphate/atp-NAD kinase, domain 2"/>
    <property type="match status" value="1"/>
</dbReference>
<dbReference type="HAMAP" id="MF_00361">
    <property type="entry name" value="NAD_kinase"/>
    <property type="match status" value="1"/>
</dbReference>
<dbReference type="InterPro" id="IPR017438">
    <property type="entry name" value="ATP-NAD_kinase_N"/>
</dbReference>
<dbReference type="InterPro" id="IPR017437">
    <property type="entry name" value="ATP-NAD_kinase_PpnK-typ_C"/>
</dbReference>
<dbReference type="InterPro" id="IPR016064">
    <property type="entry name" value="NAD/diacylglycerol_kinase_sf"/>
</dbReference>
<dbReference type="InterPro" id="IPR002504">
    <property type="entry name" value="NADK"/>
</dbReference>
<dbReference type="NCBIfam" id="NF010677">
    <property type="entry name" value="PRK14075.1"/>
    <property type="match status" value="1"/>
</dbReference>
<dbReference type="PANTHER" id="PTHR20275">
    <property type="entry name" value="NAD KINASE"/>
    <property type="match status" value="1"/>
</dbReference>
<dbReference type="PANTHER" id="PTHR20275:SF0">
    <property type="entry name" value="NAD KINASE"/>
    <property type="match status" value="1"/>
</dbReference>
<dbReference type="Pfam" id="PF01513">
    <property type="entry name" value="NAD_kinase"/>
    <property type="match status" value="1"/>
</dbReference>
<dbReference type="Pfam" id="PF20143">
    <property type="entry name" value="NAD_kinase_C"/>
    <property type="match status" value="1"/>
</dbReference>
<dbReference type="SUPFAM" id="SSF111331">
    <property type="entry name" value="NAD kinase/diacylglycerol kinase-like"/>
    <property type="match status" value="1"/>
</dbReference>
<name>NADK_THEMA</name>
<gene>
    <name type="primary">NADK</name>
    <name type="ordered locus">TM_1733</name>
</gene>
<proteinExistence type="evidence at protein level"/>
<comment type="function">
    <text evidence="1">Involved in the regulation of the intracellular balance between NAD(H) and NADP(H), and is a key enzyme in the biosynthesis of NADP. Catalyzes specifically the phosphorylation on 2'-hydroxyl of the adenosine moiety of NAD to yield NADP (By similarity).</text>
</comment>
<comment type="catalytic activity">
    <reaction evidence="2">
        <text>NAD(+) + ATP = ADP + NADP(+) + H(+)</text>
        <dbReference type="Rhea" id="RHEA:18629"/>
        <dbReference type="ChEBI" id="CHEBI:15378"/>
        <dbReference type="ChEBI" id="CHEBI:30616"/>
        <dbReference type="ChEBI" id="CHEBI:57540"/>
        <dbReference type="ChEBI" id="CHEBI:58349"/>
        <dbReference type="ChEBI" id="CHEBI:456216"/>
        <dbReference type="EC" id="2.7.1.23"/>
    </reaction>
</comment>
<comment type="cofactor">
    <cofactor evidence="2">
        <name>a divalent metal cation</name>
        <dbReference type="ChEBI" id="CHEBI:60240"/>
    </cofactor>
</comment>
<comment type="subunit">
    <text evidence="3">Homodimer.</text>
</comment>
<comment type="subcellular location">
    <subcellularLocation>
        <location evidence="2">Cytoplasm</location>
    </subcellularLocation>
</comment>
<comment type="similarity">
    <text evidence="2">Belongs to the NAD kinase family.</text>
</comment>
<keyword id="KW-0002">3D-structure</keyword>
<keyword id="KW-0067">ATP-binding</keyword>
<keyword id="KW-0963">Cytoplasm</keyword>
<keyword id="KW-0418">Kinase</keyword>
<keyword id="KW-0520">NAD</keyword>
<keyword id="KW-0521">NADP</keyword>
<keyword id="KW-0547">Nucleotide-binding</keyword>
<keyword id="KW-1185">Reference proteome</keyword>
<keyword id="KW-0808">Transferase</keyword>
<protein>
    <recommendedName>
        <fullName evidence="2">NAD kinase</fullName>
        <ecNumber evidence="2">2.7.1.23</ecNumber>
    </recommendedName>
    <alternativeName>
        <fullName evidence="2">ATP-dependent NAD kinase</fullName>
    </alternativeName>
</protein>
<organism>
    <name type="scientific">Thermotoga maritima (strain ATCC 43589 / DSM 3109 / JCM 10099 / NBRC 100826 / MSB8)</name>
    <dbReference type="NCBI Taxonomy" id="243274"/>
    <lineage>
        <taxon>Bacteria</taxon>
        <taxon>Thermotogati</taxon>
        <taxon>Thermotogota</taxon>
        <taxon>Thermotogae</taxon>
        <taxon>Thermotogales</taxon>
        <taxon>Thermotogaceae</taxon>
        <taxon>Thermotoga</taxon>
    </lineage>
</organism>
<reference key="1">
    <citation type="journal article" date="1999" name="Nature">
        <title>Evidence for lateral gene transfer between Archaea and Bacteria from genome sequence of Thermotoga maritima.</title>
        <authorList>
            <person name="Nelson K.E."/>
            <person name="Clayton R.A."/>
            <person name="Gill S.R."/>
            <person name="Gwinn M.L."/>
            <person name="Dodson R.J."/>
            <person name="Haft D.H."/>
            <person name="Hickey E.K."/>
            <person name="Peterson J.D."/>
            <person name="Nelson W.C."/>
            <person name="Ketchum K.A."/>
            <person name="McDonald L.A."/>
            <person name="Utterback T.R."/>
            <person name="Malek J.A."/>
            <person name="Linher K.D."/>
            <person name="Garrett M.M."/>
            <person name="Stewart A.M."/>
            <person name="Cotton M.D."/>
            <person name="Pratt M.S."/>
            <person name="Phillips C.A."/>
            <person name="Richardson D.L."/>
            <person name="Heidelberg J.F."/>
            <person name="Sutton G.G."/>
            <person name="Fleischmann R.D."/>
            <person name="Eisen J.A."/>
            <person name="White O."/>
            <person name="Salzberg S.L."/>
            <person name="Smith H.O."/>
            <person name="Venter J.C."/>
            <person name="Fraser C.M."/>
        </authorList>
    </citation>
    <scope>NUCLEOTIDE SEQUENCE [LARGE SCALE GENOMIC DNA]</scope>
    <source>
        <strain>ATCC 43589 / DSM 3109 / JCM 10099 / NBRC 100826 / MSB8</strain>
    </source>
</reference>
<reference key="2">
    <citation type="journal article" date="2005" name="Acta Crystallogr. F">
        <title>Structure of a NAD kinase from Thermotoga maritima at 2.3 A resolution.</title>
        <authorList>
            <person name="Oganesyan V."/>
            <person name="Huang C."/>
            <person name="Adams P.D."/>
            <person name="Jancarik J."/>
            <person name="Yokota H.A."/>
            <person name="Kim R."/>
            <person name="Kim S.H."/>
        </authorList>
    </citation>
    <scope>X-RAY CRYSTALLOGRAPHY (2.3 ANGSTROMS)</scope>
    <scope>SUBUNIT</scope>
</reference>